<gene>
    <name evidence="1" type="primary">hisG</name>
    <name type="ordered locus">YPTS_1671</name>
</gene>
<comment type="function">
    <text evidence="1">Catalyzes the condensation of ATP and 5-phosphoribose 1-diphosphate to form N'-(5'-phosphoribosyl)-ATP (PR-ATP). Has a crucial role in the pathway because the rate of histidine biosynthesis seems to be controlled primarily by regulation of HisG enzymatic activity.</text>
</comment>
<comment type="catalytic activity">
    <reaction evidence="1">
        <text>1-(5-phospho-beta-D-ribosyl)-ATP + diphosphate = 5-phospho-alpha-D-ribose 1-diphosphate + ATP</text>
        <dbReference type="Rhea" id="RHEA:18473"/>
        <dbReference type="ChEBI" id="CHEBI:30616"/>
        <dbReference type="ChEBI" id="CHEBI:33019"/>
        <dbReference type="ChEBI" id="CHEBI:58017"/>
        <dbReference type="ChEBI" id="CHEBI:73183"/>
        <dbReference type="EC" id="2.4.2.17"/>
    </reaction>
</comment>
<comment type="cofactor">
    <cofactor evidence="1">
        <name>Mg(2+)</name>
        <dbReference type="ChEBI" id="CHEBI:18420"/>
    </cofactor>
</comment>
<comment type="activity regulation">
    <text evidence="1">Feedback inhibited by histidine.</text>
</comment>
<comment type="pathway">
    <text evidence="1">Amino-acid biosynthesis; L-histidine biosynthesis; L-histidine from 5-phospho-alpha-D-ribose 1-diphosphate: step 1/9.</text>
</comment>
<comment type="subunit">
    <text evidence="1">Equilibrium between an active dimeric form, an inactive hexameric form and higher aggregates. Interconversion between the various forms is largely reversible and is influenced by the natural substrates and inhibitors of the enzyme.</text>
</comment>
<comment type="subcellular location">
    <subcellularLocation>
        <location evidence="1">Cytoplasm</location>
    </subcellularLocation>
</comment>
<comment type="similarity">
    <text evidence="1">Belongs to the ATP phosphoribosyltransferase family. Long subfamily.</text>
</comment>
<keyword id="KW-0028">Amino-acid biosynthesis</keyword>
<keyword id="KW-0067">ATP-binding</keyword>
<keyword id="KW-0963">Cytoplasm</keyword>
<keyword id="KW-0328">Glycosyltransferase</keyword>
<keyword id="KW-0368">Histidine biosynthesis</keyword>
<keyword id="KW-0460">Magnesium</keyword>
<keyword id="KW-0479">Metal-binding</keyword>
<keyword id="KW-0547">Nucleotide-binding</keyword>
<keyword id="KW-0808">Transferase</keyword>
<accession>B2JZN0</accession>
<proteinExistence type="inferred from homology"/>
<sequence>MLDKTRLRIAMQKSGRLSDESQELLSRCGIKINLQQQRLIAFAENMPIDILRVRDDDIPGLVMDGVVDLGIIGENVLEEELLNRRAQGDDPRYFTLRRLDFGGCRLSLAAPLDAEYTGPQCLQDTRIATSYPHILKQYLDKQGVRFKSCLLNGSVEVAPRAGLADAICDLVSTGATLEANGLREVEVIYRSKACLIQRDGEMSVDKQQLIDRLMTRIQGVIQARESKYIMMHAPSERLDEIITLLPGAERPTILPLAGDKSRVAMHMVSSETLFWETMEKLKALGASSILVLPIEKMME</sequence>
<dbReference type="EC" id="2.4.2.17" evidence="1"/>
<dbReference type="EMBL" id="CP001048">
    <property type="protein sequence ID" value="ACC88640.1"/>
    <property type="molecule type" value="Genomic_DNA"/>
</dbReference>
<dbReference type="RefSeq" id="WP_002211896.1">
    <property type="nucleotide sequence ID" value="NZ_CP009780.1"/>
</dbReference>
<dbReference type="SMR" id="B2JZN0"/>
<dbReference type="GeneID" id="96665168"/>
<dbReference type="KEGG" id="ypb:YPTS_1671"/>
<dbReference type="PATRIC" id="fig|502801.10.peg.1042"/>
<dbReference type="UniPathway" id="UPA00031">
    <property type="reaction ID" value="UER00006"/>
</dbReference>
<dbReference type="GO" id="GO:0005737">
    <property type="term" value="C:cytoplasm"/>
    <property type="evidence" value="ECO:0007669"/>
    <property type="project" value="UniProtKB-SubCell"/>
</dbReference>
<dbReference type="GO" id="GO:0005524">
    <property type="term" value="F:ATP binding"/>
    <property type="evidence" value="ECO:0007669"/>
    <property type="project" value="UniProtKB-KW"/>
</dbReference>
<dbReference type="GO" id="GO:0003879">
    <property type="term" value="F:ATP phosphoribosyltransferase activity"/>
    <property type="evidence" value="ECO:0007669"/>
    <property type="project" value="UniProtKB-UniRule"/>
</dbReference>
<dbReference type="GO" id="GO:0000287">
    <property type="term" value="F:magnesium ion binding"/>
    <property type="evidence" value="ECO:0007669"/>
    <property type="project" value="UniProtKB-UniRule"/>
</dbReference>
<dbReference type="GO" id="GO:0000105">
    <property type="term" value="P:L-histidine biosynthetic process"/>
    <property type="evidence" value="ECO:0007669"/>
    <property type="project" value="UniProtKB-UniRule"/>
</dbReference>
<dbReference type="CDD" id="cd13592">
    <property type="entry name" value="PBP2_HisGL2"/>
    <property type="match status" value="1"/>
</dbReference>
<dbReference type="FunFam" id="3.30.70.120:FF:000002">
    <property type="entry name" value="ATP phosphoribosyltransferase"/>
    <property type="match status" value="1"/>
</dbReference>
<dbReference type="FunFam" id="3.40.190.10:FF:000008">
    <property type="entry name" value="ATP phosphoribosyltransferase"/>
    <property type="match status" value="1"/>
</dbReference>
<dbReference type="Gene3D" id="3.30.70.120">
    <property type="match status" value="1"/>
</dbReference>
<dbReference type="Gene3D" id="3.40.190.10">
    <property type="entry name" value="Periplasmic binding protein-like II"/>
    <property type="match status" value="2"/>
</dbReference>
<dbReference type="HAMAP" id="MF_00079">
    <property type="entry name" value="HisG_Long"/>
    <property type="match status" value="1"/>
</dbReference>
<dbReference type="InterPro" id="IPR020621">
    <property type="entry name" value="ATP-PRT_HisG_long"/>
</dbReference>
<dbReference type="InterPro" id="IPR013820">
    <property type="entry name" value="ATP_PRibTrfase_cat"/>
</dbReference>
<dbReference type="InterPro" id="IPR018198">
    <property type="entry name" value="ATP_PRibTrfase_CS"/>
</dbReference>
<dbReference type="InterPro" id="IPR001348">
    <property type="entry name" value="ATP_PRibTrfase_HisG"/>
</dbReference>
<dbReference type="InterPro" id="IPR013115">
    <property type="entry name" value="HisG_C"/>
</dbReference>
<dbReference type="InterPro" id="IPR011322">
    <property type="entry name" value="N-reg_PII-like_a/b"/>
</dbReference>
<dbReference type="InterPro" id="IPR015867">
    <property type="entry name" value="N-reg_PII/ATP_PRibTrfase_C"/>
</dbReference>
<dbReference type="NCBIfam" id="TIGR00070">
    <property type="entry name" value="hisG"/>
    <property type="match status" value="1"/>
</dbReference>
<dbReference type="NCBIfam" id="TIGR03455">
    <property type="entry name" value="HisG_C-term"/>
    <property type="match status" value="1"/>
</dbReference>
<dbReference type="PANTHER" id="PTHR21403:SF8">
    <property type="entry name" value="ATP PHOSPHORIBOSYLTRANSFERASE"/>
    <property type="match status" value="1"/>
</dbReference>
<dbReference type="PANTHER" id="PTHR21403">
    <property type="entry name" value="ATP PHOSPHORIBOSYLTRANSFERASE ATP-PRTASE"/>
    <property type="match status" value="1"/>
</dbReference>
<dbReference type="Pfam" id="PF01634">
    <property type="entry name" value="HisG"/>
    <property type="match status" value="1"/>
</dbReference>
<dbReference type="Pfam" id="PF08029">
    <property type="entry name" value="HisG_C"/>
    <property type="match status" value="1"/>
</dbReference>
<dbReference type="SUPFAM" id="SSF54913">
    <property type="entry name" value="GlnB-like"/>
    <property type="match status" value="1"/>
</dbReference>
<dbReference type="SUPFAM" id="SSF53850">
    <property type="entry name" value="Periplasmic binding protein-like II"/>
    <property type="match status" value="1"/>
</dbReference>
<dbReference type="PROSITE" id="PS01316">
    <property type="entry name" value="ATP_P_PHORIBOSYLTR"/>
    <property type="match status" value="1"/>
</dbReference>
<organism>
    <name type="scientific">Yersinia pseudotuberculosis serotype IB (strain PB1/+)</name>
    <dbReference type="NCBI Taxonomy" id="502801"/>
    <lineage>
        <taxon>Bacteria</taxon>
        <taxon>Pseudomonadati</taxon>
        <taxon>Pseudomonadota</taxon>
        <taxon>Gammaproteobacteria</taxon>
        <taxon>Enterobacterales</taxon>
        <taxon>Yersiniaceae</taxon>
        <taxon>Yersinia</taxon>
    </lineage>
</organism>
<reference key="1">
    <citation type="submission" date="2008-04" db="EMBL/GenBank/DDBJ databases">
        <title>Complete sequence of Yersinia pseudotuberculosis PB1/+.</title>
        <authorList>
            <person name="Copeland A."/>
            <person name="Lucas S."/>
            <person name="Lapidus A."/>
            <person name="Glavina del Rio T."/>
            <person name="Dalin E."/>
            <person name="Tice H."/>
            <person name="Bruce D."/>
            <person name="Goodwin L."/>
            <person name="Pitluck S."/>
            <person name="Munk A.C."/>
            <person name="Brettin T."/>
            <person name="Detter J.C."/>
            <person name="Han C."/>
            <person name="Tapia R."/>
            <person name="Schmutz J."/>
            <person name="Larimer F."/>
            <person name="Land M."/>
            <person name="Hauser L."/>
            <person name="Challacombe J.F."/>
            <person name="Green L."/>
            <person name="Lindler L.E."/>
            <person name="Nikolich M.P."/>
            <person name="Richardson P."/>
        </authorList>
    </citation>
    <scope>NUCLEOTIDE SEQUENCE [LARGE SCALE GENOMIC DNA]</scope>
    <source>
        <strain>PB1/+</strain>
    </source>
</reference>
<feature type="chain" id="PRO_1000092763" description="ATP phosphoribosyltransferase">
    <location>
        <begin position="1"/>
        <end position="299"/>
    </location>
</feature>
<protein>
    <recommendedName>
        <fullName evidence="1">ATP phosphoribosyltransferase</fullName>
        <shortName evidence="1">ATP-PRT</shortName>
        <shortName evidence="1">ATP-PRTase</shortName>
        <ecNumber evidence="1">2.4.2.17</ecNumber>
    </recommendedName>
</protein>
<name>HIS1_YERPB</name>
<evidence type="ECO:0000255" key="1">
    <source>
        <dbReference type="HAMAP-Rule" id="MF_00079"/>
    </source>
</evidence>